<reference key="1">
    <citation type="journal article" date="2009" name="FEBS J.">
        <title>Macrocypins, a family of cysteine protease inhibitors from the basidiomycete Macrolepiota procera.</title>
        <authorList>
            <person name="Sabotic J."/>
            <person name="Popovic T."/>
            <person name="Puizdar V."/>
            <person name="Brzin J."/>
        </authorList>
    </citation>
    <scope>NUCLEOTIDE SEQUENCE [GENOMIC DNA]</scope>
    <scope>PROTEIN SEQUENCE OF 2-44</scope>
    <scope>FUNCTION</scope>
    <source>
        <tissue>Fruiting body</tissue>
    </source>
</reference>
<keyword id="KW-0903">Direct protein sequencing</keyword>
<keyword id="KW-0646">Protease inhibitor</keyword>
<keyword id="KW-0789">Thiol protease inhibitor</keyword>
<feature type="initiator methionine" description="Removed" evidence="2">
    <location>
        <position position="1"/>
    </location>
</feature>
<feature type="chain" id="PRO_0000397843" description="Macrocypin-5a">
    <location>
        <begin position="2"/>
        <end position="166"/>
    </location>
</feature>
<feature type="region of interest" description="Disordered" evidence="1">
    <location>
        <begin position="20"/>
        <end position="39"/>
    </location>
</feature>
<organism>
    <name type="scientific">Macrolepiota procera</name>
    <name type="common">Parasol mushroom</name>
    <dbReference type="NCBI Taxonomy" id="56183"/>
    <lineage>
        <taxon>Eukaryota</taxon>
        <taxon>Fungi</taxon>
        <taxon>Dikarya</taxon>
        <taxon>Basidiomycota</taxon>
        <taxon>Agaricomycotina</taxon>
        <taxon>Agaricomycetes</taxon>
        <taxon>Agaricomycetidae</taxon>
        <taxon>Agaricales</taxon>
        <taxon>Agaricineae</taxon>
        <taxon>Agaricaceae</taxon>
        <taxon>Macrolepiota</taxon>
    </lineage>
</organism>
<comment type="function">
    <text evidence="2">Inhibits papain and cysteine cathepsin endopeptidases, and also inhibits cathepsins B and H, which exhibit both exopeptidase and endopeptidase activities.</text>
</comment>
<comment type="similarity">
    <text evidence="3">Belongs to the protease inhibitor I85 family.</text>
</comment>
<name>MCP5A_MACPC</name>
<proteinExistence type="evidence at protein level"/>
<accession>B9V984</accession>
<dbReference type="EMBL" id="FJ495250">
    <property type="protein sequence ID" value="ACL99734.1"/>
    <property type="molecule type" value="Genomic_DNA"/>
</dbReference>
<dbReference type="SMR" id="B9V984"/>
<dbReference type="MEROPS" id="I85.003"/>
<dbReference type="GO" id="GO:0004869">
    <property type="term" value="F:cysteine-type endopeptidase inhibitor activity"/>
    <property type="evidence" value="ECO:0007669"/>
    <property type="project" value="UniProtKB-KW"/>
</dbReference>
<dbReference type="CDD" id="cd23716">
    <property type="entry name" value="beta-trefoil_Ricin_Macrocypin"/>
    <property type="match status" value="1"/>
</dbReference>
<dbReference type="Gene3D" id="2.80.10.50">
    <property type="match status" value="1"/>
</dbReference>
<evidence type="ECO:0000256" key="1">
    <source>
        <dbReference type="SAM" id="MobiDB-lite"/>
    </source>
</evidence>
<evidence type="ECO:0000269" key="2">
    <source>
    </source>
</evidence>
<evidence type="ECO:0000305" key="3"/>
<protein>
    <recommendedName>
        <fullName>Macrocypin-5a</fullName>
    </recommendedName>
</protein>
<sequence>MGFEDGFYTIRHLVEGQPPNIPGGMYASSKDGKDEPVTAEPLGPHSKIRWWIARYPEAGEDMYTITEFRVDESIPGQWARPHNEVGGPVYLYDRIRAEETGYVCEWRIQPAYEDVDGVFNIMGNSRIGSTDWADLREEGGKPQVYLKPVPVVPNMYIPRWFISKVD</sequence>